<keyword id="KW-0067">ATP-binding</keyword>
<keyword id="KW-0963">Cytoplasm</keyword>
<keyword id="KW-0418">Kinase</keyword>
<keyword id="KW-0460">Magnesium</keyword>
<keyword id="KW-0479">Metal-binding</keyword>
<keyword id="KW-0546">Nucleotide metabolism</keyword>
<keyword id="KW-0547">Nucleotide-binding</keyword>
<keyword id="KW-0597">Phosphoprotein</keyword>
<keyword id="KW-0808">Transferase</keyword>
<name>NDK_ECO81</name>
<dbReference type="EC" id="2.7.4.6" evidence="1"/>
<dbReference type="EMBL" id="CU928162">
    <property type="protein sequence ID" value="CAR09118.2"/>
    <property type="molecule type" value="Genomic_DNA"/>
</dbReference>
<dbReference type="RefSeq" id="WP_000963849.1">
    <property type="nucleotide sequence ID" value="NC_011745.1"/>
</dbReference>
<dbReference type="SMR" id="B7MYF2"/>
<dbReference type="KEGG" id="ecq:ECED1_2949"/>
<dbReference type="HOGENOM" id="CLU_060216_8_1_6"/>
<dbReference type="Proteomes" id="UP000000748">
    <property type="component" value="Chromosome"/>
</dbReference>
<dbReference type="GO" id="GO:0005737">
    <property type="term" value="C:cytoplasm"/>
    <property type="evidence" value="ECO:0007669"/>
    <property type="project" value="UniProtKB-SubCell"/>
</dbReference>
<dbReference type="GO" id="GO:0005524">
    <property type="term" value="F:ATP binding"/>
    <property type="evidence" value="ECO:0007669"/>
    <property type="project" value="UniProtKB-UniRule"/>
</dbReference>
<dbReference type="GO" id="GO:0046872">
    <property type="term" value="F:metal ion binding"/>
    <property type="evidence" value="ECO:0007669"/>
    <property type="project" value="UniProtKB-KW"/>
</dbReference>
<dbReference type="GO" id="GO:0004550">
    <property type="term" value="F:nucleoside diphosphate kinase activity"/>
    <property type="evidence" value="ECO:0007669"/>
    <property type="project" value="UniProtKB-UniRule"/>
</dbReference>
<dbReference type="GO" id="GO:0006241">
    <property type="term" value="P:CTP biosynthetic process"/>
    <property type="evidence" value="ECO:0007669"/>
    <property type="project" value="UniProtKB-UniRule"/>
</dbReference>
<dbReference type="GO" id="GO:0006183">
    <property type="term" value="P:GTP biosynthetic process"/>
    <property type="evidence" value="ECO:0007669"/>
    <property type="project" value="UniProtKB-UniRule"/>
</dbReference>
<dbReference type="GO" id="GO:0006228">
    <property type="term" value="P:UTP biosynthetic process"/>
    <property type="evidence" value="ECO:0007669"/>
    <property type="project" value="UniProtKB-UniRule"/>
</dbReference>
<dbReference type="CDD" id="cd04413">
    <property type="entry name" value="NDPk_I"/>
    <property type="match status" value="1"/>
</dbReference>
<dbReference type="FunFam" id="3.30.70.141:FF:000001">
    <property type="entry name" value="Nucleoside diphosphate kinase"/>
    <property type="match status" value="1"/>
</dbReference>
<dbReference type="Gene3D" id="3.30.70.141">
    <property type="entry name" value="Nucleoside diphosphate kinase-like domain"/>
    <property type="match status" value="1"/>
</dbReference>
<dbReference type="HAMAP" id="MF_00451">
    <property type="entry name" value="NDP_kinase"/>
    <property type="match status" value="1"/>
</dbReference>
<dbReference type="InterPro" id="IPR034907">
    <property type="entry name" value="NDK-like_dom"/>
</dbReference>
<dbReference type="InterPro" id="IPR036850">
    <property type="entry name" value="NDK-like_dom_sf"/>
</dbReference>
<dbReference type="InterPro" id="IPR001564">
    <property type="entry name" value="Nucleoside_diP_kinase"/>
</dbReference>
<dbReference type="InterPro" id="IPR023005">
    <property type="entry name" value="Nucleoside_diP_kinase_AS"/>
</dbReference>
<dbReference type="NCBIfam" id="NF001908">
    <property type="entry name" value="PRK00668.1"/>
    <property type="match status" value="1"/>
</dbReference>
<dbReference type="PANTHER" id="PTHR46161">
    <property type="entry name" value="NUCLEOSIDE DIPHOSPHATE KINASE"/>
    <property type="match status" value="1"/>
</dbReference>
<dbReference type="PANTHER" id="PTHR46161:SF3">
    <property type="entry name" value="NUCLEOSIDE DIPHOSPHATE KINASE DDB_G0292928-RELATED"/>
    <property type="match status" value="1"/>
</dbReference>
<dbReference type="Pfam" id="PF00334">
    <property type="entry name" value="NDK"/>
    <property type="match status" value="1"/>
</dbReference>
<dbReference type="PRINTS" id="PR01243">
    <property type="entry name" value="NUCDPKINASE"/>
</dbReference>
<dbReference type="SMART" id="SM00562">
    <property type="entry name" value="NDK"/>
    <property type="match status" value="1"/>
</dbReference>
<dbReference type="SUPFAM" id="SSF54919">
    <property type="entry name" value="Nucleoside diphosphate kinase, NDK"/>
    <property type="match status" value="1"/>
</dbReference>
<dbReference type="PROSITE" id="PS00469">
    <property type="entry name" value="NDPK"/>
    <property type="match status" value="1"/>
</dbReference>
<dbReference type="PROSITE" id="PS51374">
    <property type="entry name" value="NDPK_LIKE"/>
    <property type="match status" value="1"/>
</dbReference>
<comment type="function">
    <text evidence="1">Major role in the synthesis of nucleoside triphosphates other than ATP. The ATP gamma phosphate is transferred to the NDP beta phosphate via a ping-pong mechanism, using a phosphorylated active-site intermediate.</text>
</comment>
<comment type="catalytic activity">
    <reaction evidence="1">
        <text>a 2'-deoxyribonucleoside 5'-diphosphate + ATP = a 2'-deoxyribonucleoside 5'-triphosphate + ADP</text>
        <dbReference type="Rhea" id="RHEA:44640"/>
        <dbReference type="ChEBI" id="CHEBI:30616"/>
        <dbReference type="ChEBI" id="CHEBI:61560"/>
        <dbReference type="ChEBI" id="CHEBI:73316"/>
        <dbReference type="ChEBI" id="CHEBI:456216"/>
        <dbReference type="EC" id="2.7.4.6"/>
    </reaction>
</comment>
<comment type="catalytic activity">
    <reaction evidence="1">
        <text>a ribonucleoside 5'-diphosphate + ATP = a ribonucleoside 5'-triphosphate + ADP</text>
        <dbReference type="Rhea" id="RHEA:18113"/>
        <dbReference type="ChEBI" id="CHEBI:30616"/>
        <dbReference type="ChEBI" id="CHEBI:57930"/>
        <dbReference type="ChEBI" id="CHEBI:61557"/>
        <dbReference type="ChEBI" id="CHEBI:456216"/>
        <dbReference type="EC" id="2.7.4.6"/>
    </reaction>
</comment>
<comment type="cofactor">
    <cofactor evidence="1">
        <name>Mg(2+)</name>
        <dbReference type="ChEBI" id="CHEBI:18420"/>
    </cofactor>
</comment>
<comment type="subunit">
    <text evidence="1">Homotetramer.</text>
</comment>
<comment type="subcellular location">
    <subcellularLocation>
        <location evidence="1">Cytoplasm</location>
    </subcellularLocation>
</comment>
<comment type="similarity">
    <text evidence="1">Belongs to the NDK family.</text>
</comment>
<reference key="1">
    <citation type="journal article" date="2009" name="PLoS Genet.">
        <title>Organised genome dynamics in the Escherichia coli species results in highly diverse adaptive paths.</title>
        <authorList>
            <person name="Touchon M."/>
            <person name="Hoede C."/>
            <person name="Tenaillon O."/>
            <person name="Barbe V."/>
            <person name="Baeriswyl S."/>
            <person name="Bidet P."/>
            <person name="Bingen E."/>
            <person name="Bonacorsi S."/>
            <person name="Bouchier C."/>
            <person name="Bouvet O."/>
            <person name="Calteau A."/>
            <person name="Chiapello H."/>
            <person name="Clermont O."/>
            <person name="Cruveiller S."/>
            <person name="Danchin A."/>
            <person name="Diard M."/>
            <person name="Dossat C."/>
            <person name="Karoui M.E."/>
            <person name="Frapy E."/>
            <person name="Garry L."/>
            <person name="Ghigo J.M."/>
            <person name="Gilles A.M."/>
            <person name="Johnson J."/>
            <person name="Le Bouguenec C."/>
            <person name="Lescat M."/>
            <person name="Mangenot S."/>
            <person name="Martinez-Jehanne V."/>
            <person name="Matic I."/>
            <person name="Nassif X."/>
            <person name="Oztas S."/>
            <person name="Petit M.A."/>
            <person name="Pichon C."/>
            <person name="Rouy Z."/>
            <person name="Ruf C.S."/>
            <person name="Schneider D."/>
            <person name="Tourret J."/>
            <person name="Vacherie B."/>
            <person name="Vallenet D."/>
            <person name="Medigue C."/>
            <person name="Rocha E.P.C."/>
            <person name="Denamur E."/>
        </authorList>
    </citation>
    <scope>NUCLEOTIDE SEQUENCE [LARGE SCALE GENOMIC DNA]</scope>
    <source>
        <strain>ED1a</strain>
    </source>
</reference>
<sequence length="143" mass="15466">MAIERTFSIIKPNAVAKNVIGSIFARFETAGFKIVGTKMLHLTVEQARGFYAEHDGKPFFDGLVEFMTSGPIVVSVLEGENAVQRHRDLLGATNPANALAGTLRADYADSLTENGTHGSDSVESAAREIAYFFGEGEVCPRTR</sequence>
<protein>
    <recommendedName>
        <fullName evidence="1">Nucleoside diphosphate kinase</fullName>
        <shortName evidence="1">NDK</shortName>
        <shortName evidence="1">NDP kinase</shortName>
        <ecNumber evidence="1">2.7.4.6</ecNumber>
    </recommendedName>
    <alternativeName>
        <fullName evidence="1">Nucleoside-2-P kinase</fullName>
    </alternativeName>
</protein>
<proteinExistence type="inferred from homology"/>
<feature type="chain" id="PRO_1000135256" description="Nucleoside diphosphate kinase">
    <location>
        <begin position="1"/>
        <end position="143"/>
    </location>
</feature>
<feature type="active site" description="Pros-phosphohistidine intermediate" evidence="1">
    <location>
        <position position="117"/>
    </location>
</feature>
<feature type="binding site" evidence="1">
    <location>
        <position position="11"/>
    </location>
    <ligand>
        <name>ATP</name>
        <dbReference type="ChEBI" id="CHEBI:30616"/>
    </ligand>
</feature>
<feature type="binding site" evidence="1">
    <location>
        <position position="59"/>
    </location>
    <ligand>
        <name>ATP</name>
        <dbReference type="ChEBI" id="CHEBI:30616"/>
    </ligand>
</feature>
<feature type="binding site" evidence="1">
    <location>
        <position position="87"/>
    </location>
    <ligand>
        <name>ATP</name>
        <dbReference type="ChEBI" id="CHEBI:30616"/>
    </ligand>
</feature>
<feature type="binding site" evidence="1">
    <location>
        <position position="93"/>
    </location>
    <ligand>
        <name>ATP</name>
        <dbReference type="ChEBI" id="CHEBI:30616"/>
    </ligand>
</feature>
<feature type="binding site" evidence="1">
    <location>
        <position position="104"/>
    </location>
    <ligand>
        <name>ATP</name>
        <dbReference type="ChEBI" id="CHEBI:30616"/>
    </ligand>
</feature>
<feature type="binding site" evidence="1">
    <location>
        <position position="114"/>
    </location>
    <ligand>
        <name>ATP</name>
        <dbReference type="ChEBI" id="CHEBI:30616"/>
    </ligand>
</feature>
<organism>
    <name type="scientific">Escherichia coli O81 (strain ED1a)</name>
    <dbReference type="NCBI Taxonomy" id="585397"/>
    <lineage>
        <taxon>Bacteria</taxon>
        <taxon>Pseudomonadati</taxon>
        <taxon>Pseudomonadota</taxon>
        <taxon>Gammaproteobacteria</taxon>
        <taxon>Enterobacterales</taxon>
        <taxon>Enterobacteriaceae</taxon>
        <taxon>Escherichia</taxon>
    </lineage>
</organism>
<accession>B7MYF2</accession>
<evidence type="ECO:0000255" key="1">
    <source>
        <dbReference type="HAMAP-Rule" id="MF_00451"/>
    </source>
</evidence>
<gene>
    <name evidence="1" type="primary">ndk</name>
    <name type="ordered locus">ECED1_2949</name>
</gene>